<gene>
    <name evidence="1" type="primary">ribH</name>
    <name type="ordered locus">BCAH820_4136</name>
</gene>
<keyword id="KW-0686">Riboflavin biosynthesis</keyword>
<keyword id="KW-0808">Transferase</keyword>
<reference key="1">
    <citation type="submission" date="2008-10" db="EMBL/GenBank/DDBJ databases">
        <title>Genome sequence of Bacillus cereus AH820.</title>
        <authorList>
            <person name="Dodson R.J."/>
            <person name="Durkin A.S."/>
            <person name="Rosovitz M.J."/>
            <person name="Rasko D.A."/>
            <person name="Hoffmaster A."/>
            <person name="Ravel J."/>
            <person name="Sutton G."/>
        </authorList>
    </citation>
    <scope>NUCLEOTIDE SEQUENCE [LARGE SCALE GENOMIC DNA]</scope>
    <source>
        <strain>AH820</strain>
    </source>
</reference>
<proteinExistence type="inferred from homology"/>
<organism>
    <name type="scientific">Bacillus cereus (strain AH820)</name>
    <dbReference type="NCBI Taxonomy" id="405535"/>
    <lineage>
        <taxon>Bacteria</taxon>
        <taxon>Bacillati</taxon>
        <taxon>Bacillota</taxon>
        <taxon>Bacilli</taxon>
        <taxon>Bacillales</taxon>
        <taxon>Bacillaceae</taxon>
        <taxon>Bacillus</taxon>
        <taxon>Bacillus cereus group</taxon>
    </lineage>
</organism>
<accession>B7JLW7</accession>
<name>RISB_BACC0</name>
<comment type="function">
    <text evidence="1">Catalyzes the formation of 6,7-dimethyl-8-ribityllumazine by condensation of 5-amino-6-(D-ribitylamino)uracil with 3,4-dihydroxy-2-butanone 4-phosphate. This is the penultimate step in the biosynthesis of riboflavin.</text>
</comment>
<comment type="catalytic activity">
    <reaction evidence="1">
        <text>(2S)-2-hydroxy-3-oxobutyl phosphate + 5-amino-6-(D-ribitylamino)uracil = 6,7-dimethyl-8-(1-D-ribityl)lumazine + phosphate + 2 H2O + H(+)</text>
        <dbReference type="Rhea" id="RHEA:26152"/>
        <dbReference type="ChEBI" id="CHEBI:15377"/>
        <dbReference type="ChEBI" id="CHEBI:15378"/>
        <dbReference type="ChEBI" id="CHEBI:15934"/>
        <dbReference type="ChEBI" id="CHEBI:43474"/>
        <dbReference type="ChEBI" id="CHEBI:58201"/>
        <dbReference type="ChEBI" id="CHEBI:58830"/>
        <dbReference type="EC" id="2.5.1.78"/>
    </reaction>
</comment>
<comment type="pathway">
    <text evidence="1">Cofactor biosynthesis; riboflavin biosynthesis; riboflavin from 2-hydroxy-3-oxobutyl phosphate and 5-amino-6-(D-ribitylamino)uracil: step 1/2.</text>
</comment>
<comment type="subunit">
    <text evidence="1">Forms an icosahedral capsid composed of 60 subunits, arranged as a dodecamer of pentamers.</text>
</comment>
<comment type="similarity">
    <text evidence="1">Belongs to the DMRL synthase family.</text>
</comment>
<feature type="chain" id="PRO_1000195459" description="6,7-dimethyl-8-ribityllumazine synthase">
    <location>
        <begin position="1"/>
        <end position="153"/>
    </location>
</feature>
<feature type="active site" description="Proton donor" evidence="1">
    <location>
        <position position="87"/>
    </location>
</feature>
<feature type="binding site" evidence="1">
    <location>
        <position position="21"/>
    </location>
    <ligand>
        <name>5-amino-6-(D-ribitylamino)uracil</name>
        <dbReference type="ChEBI" id="CHEBI:15934"/>
    </ligand>
</feature>
<feature type="binding site" evidence="1">
    <location>
        <begin position="55"/>
        <end position="57"/>
    </location>
    <ligand>
        <name>5-amino-6-(D-ribitylamino)uracil</name>
        <dbReference type="ChEBI" id="CHEBI:15934"/>
    </ligand>
</feature>
<feature type="binding site" evidence="1">
    <location>
        <begin position="79"/>
        <end position="81"/>
    </location>
    <ligand>
        <name>5-amino-6-(D-ribitylamino)uracil</name>
        <dbReference type="ChEBI" id="CHEBI:15934"/>
    </ligand>
</feature>
<feature type="binding site" evidence="1">
    <location>
        <begin position="84"/>
        <end position="85"/>
    </location>
    <ligand>
        <name>(2S)-2-hydroxy-3-oxobutyl phosphate</name>
        <dbReference type="ChEBI" id="CHEBI:58830"/>
    </ligand>
</feature>
<feature type="binding site" evidence="1">
    <location>
        <position position="112"/>
    </location>
    <ligand>
        <name>5-amino-6-(D-ribitylamino)uracil</name>
        <dbReference type="ChEBI" id="CHEBI:15934"/>
    </ligand>
</feature>
<feature type="binding site" evidence="1">
    <location>
        <position position="126"/>
    </location>
    <ligand>
        <name>(2S)-2-hydroxy-3-oxobutyl phosphate</name>
        <dbReference type="ChEBI" id="CHEBI:58830"/>
    </ligand>
</feature>
<evidence type="ECO:0000255" key="1">
    <source>
        <dbReference type="HAMAP-Rule" id="MF_00178"/>
    </source>
</evidence>
<sequence length="153" mass="16255">MVFEGHLVGTGLKVGVVVGRFNEFITSKLLGGALDGLKRHGVEENDIDVAWVPGAFEIPLIAKKMANSGKYDAVITLGTVIRGATTHYDYVCNEVAKGVASLSLQTDIPVIFGVLTTETIEQAIERAGTKAGNKGYESAVAAIEMAHLSKHWA</sequence>
<protein>
    <recommendedName>
        <fullName evidence="1">6,7-dimethyl-8-ribityllumazine synthase</fullName>
        <shortName evidence="1">DMRL synthase</shortName>
        <shortName evidence="1">LS</shortName>
        <shortName evidence="1">Lumazine synthase</shortName>
        <ecNumber evidence="1">2.5.1.78</ecNumber>
    </recommendedName>
</protein>
<dbReference type="EC" id="2.5.1.78" evidence="1"/>
<dbReference type="EMBL" id="CP001283">
    <property type="protein sequence ID" value="ACK87624.1"/>
    <property type="molecule type" value="Genomic_DNA"/>
</dbReference>
<dbReference type="RefSeq" id="WP_000230891.1">
    <property type="nucleotide sequence ID" value="NC_011773.1"/>
</dbReference>
<dbReference type="SMR" id="B7JLW7"/>
<dbReference type="GeneID" id="45024001"/>
<dbReference type="KEGG" id="bcu:BCAH820_4136"/>
<dbReference type="HOGENOM" id="CLU_089358_1_1_9"/>
<dbReference type="UniPathway" id="UPA00275">
    <property type="reaction ID" value="UER00404"/>
</dbReference>
<dbReference type="Proteomes" id="UP000001363">
    <property type="component" value="Chromosome"/>
</dbReference>
<dbReference type="GO" id="GO:0005829">
    <property type="term" value="C:cytosol"/>
    <property type="evidence" value="ECO:0007669"/>
    <property type="project" value="TreeGrafter"/>
</dbReference>
<dbReference type="GO" id="GO:0009349">
    <property type="term" value="C:riboflavin synthase complex"/>
    <property type="evidence" value="ECO:0007669"/>
    <property type="project" value="InterPro"/>
</dbReference>
<dbReference type="GO" id="GO:0000906">
    <property type="term" value="F:6,7-dimethyl-8-ribityllumazine synthase activity"/>
    <property type="evidence" value="ECO:0007669"/>
    <property type="project" value="UniProtKB-UniRule"/>
</dbReference>
<dbReference type="GO" id="GO:0009231">
    <property type="term" value="P:riboflavin biosynthetic process"/>
    <property type="evidence" value="ECO:0007669"/>
    <property type="project" value="UniProtKB-UniRule"/>
</dbReference>
<dbReference type="CDD" id="cd09209">
    <property type="entry name" value="Lumazine_synthase-I"/>
    <property type="match status" value="1"/>
</dbReference>
<dbReference type="FunFam" id="3.40.50.960:FF:000001">
    <property type="entry name" value="6,7-dimethyl-8-ribityllumazine synthase"/>
    <property type="match status" value="1"/>
</dbReference>
<dbReference type="Gene3D" id="3.40.50.960">
    <property type="entry name" value="Lumazine/riboflavin synthase"/>
    <property type="match status" value="1"/>
</dbReference>
<dbReference type="HAMAP" id="MF_00178">
    <property type="entry name" value="Lumazine_synth"/>
    <property type="match status" value="1"/>
</dbReference>
<dbReference type="InterPro" id="IPR034964">
    <property type="entry name" value="LS"/>
</dbReference>
<dbReference type="InterPro" id="IPR002180">
    <property type="entry name" value="LS/RS"/>
</dbReference>
<dbReference type="InterPro" id="IPR036467">
    <property type="entry name" value="LS/RS_sf"/>
</dbReference>
<dbReference type="NCBIfam" id="TIGR00114">
    <property type="entry name" value="lumazine-synth"/>
    <property type="match status" value="1"/>
</dbReference>
<dbReference type="NCBIfam" id="NF000812">
    <property type="entry name" value="PRK00061.1-4"/>
    <property type="match status" value="1"/>
</dbReference>
<dbReference type="PANTHER" id="PTHR21058:SF0">
    <property type="entry name" value="6,7-DIMETHYL-8-RIBITYLLUMAZINE SYNTHASE"/>
    <property type="match status" value="1"/>
</dbReference>
<dbReference type="PANTHER" id="PTHR21058">
    <property type="entry name" value="6,7-DIMETHYL-8-RIBITYLLUMAZINE SYNTHASE DMRL SYNTHASE LUMAZINE SYNTHASE"/>
    <property type="match status" value="1"/>
</dbReference>
<dbReference type="Pfam" id="PF00885">
    <property type="entry name" value="DMRL_synthase"/>
    <property type="match status" value="1"/>
</dbReference>
<dbReference type="SUPFAM" id="SSF52121">
    <property type="entry name" value="Lumazine synthase"/>
    <property type="match status" value="1"/>
</dbReference>